<organism>
    <name type="scientific">Marinobacter nauticus (strain ATCC 700491 / DSM 11845 / VT8)</name>
    <name type="common">Marinobacter aquaeolei</name>
    <dbReference type="NCBI Taxonomy" id="351348"/>
    <lineage>
        <taxon>Bacteria</taxon>
        <taxon>Pseudomonadati</taxon>
        <taxon>Pseudomonadota</taxon>
        <taxon>Gammaproteobacteria</taxon>
        <taxon>Pseudomonadales</taxon>
        <taxon>Marinobacteraceae</taxon>
        <taxon>Marinobacter</taxon>
    </lineage>
</organism>
<evidence type="ECO:0000255" key="1">
    <source>
        <dbReference type="HAMAP-Rule" id="MF_01201"/>
    </source>
</evidence>
<gene>
    <name type="primary">alr</name>
    <name type="ordered locus">Maqu_2381</name>
</gene>
<name>ALR_MARN8</name>
<keyword id="KW-0413">Isomerase</keyword>
<keyword id="KW-0663">Pyridoxal phosphate</keyword>
<sequence>MPRPTVARIDLDALKHNFRRARELAGTAYAMAVVKADGYGHGIRSVADALAPETSRFAVACIEEAIAIRGAGHRHSVVLLQGTHQKDDLAECERSGFEPVLHCQQQLSWLGAGRSPRFWIKVNTGMNRLGFRPEELPEVMAGLEEAGLKHLAIGFVTHFACADDSDSEMTGLQTRIFERAVAPWPDLMRSVGNSAAHFRPNQPLYEWSRPGIMLYGASPMEGKTGAELGLCPAMTLQAPLITTRVVRAGESVGYGASWTASQDTRMGMVAIGYADGYPRHAGTGTPAAVRGQRIRLLGRVSMDMLAVDLSAVPEAREGDMVELWGKTVSVDEVATCAGTIGYELLTGVTSRVPRVHE</sequence>
<accession>A1U388</accession>
<reference key="1">
    <citation type="journal article" date="2011" name="Appl. Environ. Microbiol.">
        <title>Genomic potential of Marinobacter aquaeolei, a biogeochemical 'opportunitroph'.</title>
        <authorList>
            <person name="Singer E."/>
            <person name="Webb E.A."/>
            <person name="Nelson W.C."/>
            <person name="Heidelberg J.F."/>
            <person name="Ivanova N."/>
            <person name="Pati A."/>
            <person name="Edwards K.J."/>
        </authorList>
    </citation>
    <scope>NUCLEOTIDE SEQUENCE [LARGE SCALE GENOMIC DNA]</scope>
    <source>
        <strain>ATCC 700491 / DSM 11845 / VT8</strain>
    </source>
</reference>
<protein>
    <recommendedName>
        <fullName evidence="1">Alanine racemase</fullName>
        <ecNumber evidence="1">5.1.1.1</ecNumber>
    </recommendedName>
</protein>
<dbReference type="EC" id="5.1.1.1" evidence="1"/>
<dbReference type="EMBL" id="CP000514">
    <property type="protein sequence ID" value="ABM19457.1"/>
    <property type="molecule type" value="Genomic_DNA"/>
</dbReference>
<dbReference type="RefSeq" id="WP_011785844.1">
    <property type="nucleotide sequence ID" value="NC_008740.1"/>
</dbReference>
<dbReference type="SMR" id="A1U388"/>
<dbReference type="STRING" id="351348.Maqu_2381"/>
<dbReference type="KEGG" id="maq:Maqu_2381"/>
<dbReference type="eggNOG" id="COG0787">
    <property type="taxonomic scope" value="Bacteria"/>
</dbReference>
<dbReference type="HOGENOM" id="CLU_028393_1_0_6"/>
<dbReference type="OrthoDB" id="9813814at2"/>
<dbReference type="UniPathway" id="UPA00042">
    <property type="reaction ID" value="UER00497"/>
</dbReference>
<dbReference type="Proteomes" id="UP000000998">
    <property type="component" value="Chromosome"/>
</dbReference>
<dbReference type="GO" id="GO:0005829">
    <property type="term" value="C:cytosol"/>
    <property type="evidence" value="ECO:0007669"/>
    <property type="project" value="TreeGrafter"/>
</dbReference>
<dbReference type="GO" id="GO:0008784">
    <property type="term" value="F:alanine racemase activity"/>
    <property type="evidence" value="ECO:0007669"/>
    <property type="project" value="UniProtKB-UniRule"/>
</dbReference>
<dbReference type="GO" id="GO:0030170">
    <property type="term" value="F:pyridoxal phosphate binding"/>
    <property type="evidence" value="ECO:0007669"/>
    <property type="project" value="UniProtKB-UniRule"/>
</dbReference>
<dbReference type="GO" id="GO:0030632">
    <property type="term" value="P:D-alanine biosynthetic process"/>
    <property type="evidence" value="ECO:0007669"/>
    <property type="project" value="UniProtKB-UniRule"/>
</dbReference>
<dbReference type="CDD" id="cd06827">
    <property type="entry name" value="PLPDE_III_AR_proteobact"/>
    <property type="match status" value="1"/>
</dbReference>
<dbReference type="FunFam" id="3.20.20.10:FF:000002">
    <property type="entry name" value="Alanine racemase"/>
    <property type="match status" value="1"/>
</dbReference>
<dbReference type="Gene3D" id="3.20.20.10">
    <property type="entry name" value="Alanine racemase"/>
    <property type="match status" value="1"/>
</dbReference>
<dbReference type="Gene3D" id="2.40.37.10">
    <property type="entry name" value="Lyase, Ornithine Decarboxylase, Chain A, domain 1"/>
    <property type="match status" value="1"/>
</dbReference>
<dbReference type="HAMAP" id="MF_01201">
    <property type="entry name" value="Ala_racemase"/>
    <property type="match status" value="1"/>
</dbReference>
<dbReference type="InterPro" id="IPR000821">
    <property type="entry name" value="Ala_racemase"/>
</dbReference>
<dbReference type="InterPro" id="IPR009006">
    <property type="entry name" value="Ala_racemase/Decarboxylase_C"/>
</dbReference>
<dbReference type="InterPro" id="IPR011079">
    <property type="entry name" value="Ala_racemase_C"/>
</dbReference>
<dbReference type="InterPro" id="IPR001608">
    <property type="entry name" value="Ala_racemase_N"/>
</dbReference>
<dbReference type="InterPro" id="IPR020622">
    <property type="entry name" value="Ala_racemase_pyridoxalP-BS"/>
</dbReference>
<dbReference type="InterPro" id="IPR029066">
    <property type="entry name" value="PLP-binding_barrel"/>
</dbReference>
<dbReference type="NCBIfam" id="TIGR00492">
    <property type="entry name" value="alr"/>
    <property type="match status" value="1"/>
</dbReference>
<dbReference type="PANTHER" id="PTHR30511">
    <property type="entry name" value="ALANINE RACEMASE"/>
    <property type="match status" value="1"/>
</dbReference>
<dbReference type="PANTHER" id="PTHR30511:SF0">
    <property type="entry name" value="ALANINE RACEMASE, CATABOLIC-RELATED"/>
    <property type="match status" value="1"/>
</dbReference>
<dbReference type="Pfam" id="PF00842">
    <property type="entry name" value="Ala_racemase_C"/>
    <property type="match status" value="1"/>
</dbReference>
<dbReference type="Pfam" id="PF01168">
    <property type="entry name" value="Ala_racemase_N"/>
    <property type="match status" value="1"/>
</dbReference>
<dbReference type="PRINTS" id="PR00992">
    <property type="entry name" value="ALARACEMASE"/>
</dbReference>
<dbReference type="SMART" id="SM01005">
    <property type="entry name" value="Ala_racemase_C"/>
    <property type="match status" value="1"/>
</dbReference>
<dbReference type="SUPFAM" id="SSF50621">
    <property type="entry name" value="Alanine racemase C-terminal domain-like"/>
    <property type="match status" value="1"/>
</dbReference>
<dbReference type="SUPFAM" id="SSF51419">
    <property type="entry name" value="PLP-binding barrel"/>
    <property type="match status" value="1"/>
</dbReference>
<dbReference type="PROSITE" id="PS00395">
    <property type="entry name" value="ALANINE_RACEMASE"/>
    <property type="match status" value="1"/>
</dbReference>
<feature type="chain" id="PRO_1000066008" description="Alanine racemase">
    <location>
        <begin position="1"/>
        <end position="357"/>
    </location>
</feature>
<feature type="active site" description="Proton acceptor; specific for D-alanine" evidence="1">
    <location>
        <position position="35"/>
    </location>
</feature>
<feature type="active site" description="Proton acceptor; specific for L-alanine" evidence="1">
    <location>
        <position position="254"/>
    </location>
</feature>
<feature type="binding site" evidence="1">
    <location>
        <position position="128"/>
    </location>
    <ligand>
        <name>substrate</name>
    </ligand>
</feature>
<feature type="binding site" evidence="1">
    <location>
        <position position="302"/>
    </location>
    <ligand>
        <name>substrate</name>
    </ligand>
</feature>
<feature type="modified residue" description="N6-(pyridoxal phosphate)lysine" evidence="1">
    <location>
        <position position="35"/>
    </location>
</feature>
<comment type="function">
    <text evidence="1">Catalyzes the interconversion of L-alanine and D-alanine. May also act on other amino acids.</text>
</comment>
<comment type="catalytic activity">
    <reaction evidence="1">
        <text>L-alanine = D-alanine</text>
        <dbReference type="Rhea" id="RHEA:20249"/>
        <dbReference type="ChEBI" id="CHEBI:57416"/>
        <dbReference type="ChEBI" id="CHEBI:57972"/>
        <dbReference type="EC" id="5.1.1.1"/>
    </reaction>
</comment>
<comment type="cofactor">
    <cofactor evidence="1">
        <name>pyridoxal 5'-phosphate</name>
        <dbReference type="ChEBI" id="CHEBI:597326"/>
    </cofactor>
</comment>
<comment type="pathway">
    <text evidence="1">Amino-acid biosynthesis; D-alanine biosynthesis; D-alanine from L-alanine: step 1/1.</text>
</comment>
<comment type="similarity">
    <text evidence="1">Belongs to the alanine racemase family.</text>
</comment>
<proteinExistence type="inferred from homology"/>